<dbReference type="EMBL" id="CP000825">
    <property type="protein sequence ID" value="ABV51391.1"/>
    <property type="molecule type" value="Genomic_DNA"/>
</dbReference>
<dbReference type="RefSeq" id="WP_002806267.1">
    <property type="nucleotide sequence ID" value="NC_009840.1"/>
</dbReference>
<dbReference type="SMR" id="A8G710"/>
<dbReference type="STRING" id="93060.P9215_17781"/>
<dbReference type="KEGG" id="pmh:P9215_17781"/>
<dbReference type="eggNOG" id="COG0049">
    <property type="taxonomic scope" value="Bacteria"/>
</dbReference>
<dbReference type="HOGENOM" id="CLU_072226_1_1_3"/>
<dbReference type="OrthoDB" id="9807653at2"/>
<dbReference type="Proteomes" id="UP000002014">
    <property type="component" value="Chromosome"/>
</dbReference>
<dbReference type="GO" id="GO:0015935">
    <property type="term" value="C:small ribosomal subunit"/>
    <property type="evidence" value="ECO:0007669"/>
    <property type="project" value="InterPro"/>
</dbReference>
<dbReference type="GO" id="GO:0019843">
    <property type="term" value="F:rRNA binding"/>
    <property type="evidence" value="ECO:0007669"/>
    <property type="project" value="UniProtKB-UniRule"/>
</dbReference>
<dbReference type="GO" id="GO:0003735">
    <property type="term" value="F:structural constituent of ribosome"/>
    <property type="evidence" value="ECO:0007669"/>
    <property type="project" value="InterPro"/>
</dbReference>
<dbReference type="GO" id="GO:0000049">
    <property type="term" value="F:tRNA binding"/>
    <property type="evidence" value="ECO:0007669"/>
    <property type="project" value="UniProtKB-UniRule"/>
</dbReference>
<dbReference type="GO" id="GO:0006412">
    <property type="term" value="P:translation"/>
    <property type="evidence" value="ECO:0007669"/>
    <property type="project" value="UniProtKB-UniRule"/>
</dbReference>
<dbReference type="CDD" id="cd14869">
    <property type="entry name" value="uS7_Bacteria"/>
    <property type="match status" value="1"/>
</dbReference>
<dbReference type="FunFam" id="1.10.455.10:FF:000001">
    <property type="entry name" value="30S ribosomal protein S7"/>
    <property type="match status" value="1"/>
</dbReference>
<dbReference type="Gene3D" id="1.10.455.10">
    <property type="entry name" value="Ribosomal protein S7 domain"/>
    <property type="match status" value="1"/>
</dbReference>
<dbReference type="HAMAP" id="MF_00480_B">
    <property type="entry name" value="Ribosomal_uS7_B"/>
    <property type="match status" value="1"/>
</dbReference>
<dbReference type="InterPro" id="IPR000235">
    <property type="entry name" value="Ribosomal_uS7"/>
</dbReference>
<dbReference type="InterPro" id="IPR005717">
    <property type="entry name" value="Ribosomal_uS7_bac/org-type"/>
</dbReference>
<dbReference type="InterPro" id="IPR020606">
    <property type="entry name" value="Ribosomal_uS7_CS"/>
</dbReference>
<dbReference type="InterPro" id="IPR023798">
    <property type="entry name" value="Ribosomal_uS7_dom"/>
</dbReference>
<dbReference type="InterPro" id="IPR036823">
    <property type="entry name" value="Ribosomal_uS7_dom_sf"/>
</dbReference>
<dbReference type="NCBIfam" id="TIGR01029">
    <property type="entry name" value="rpsG_bact"/>
    <property type="match status" value="1"/>
</dbReference>
<dbReference type="PANTHER" id="PTHR11205">
    <property type="entry name" value="RIBOSOMAL PROTEIN S7"/>
    <property type="match status" value="1"/>
</dbReference>
<dbReference type="Pfam" id="PF00177">
    <property type="entry name" value="Ribosomal_S7"/>
    <property type="match status" value="1"/>
</dbReference>
<dbReference type="PIRSF" id="PIRSF002122">
    <property type="entry name" value="RPS7p_RPS7a_RPS5e_RPS7o"/>
    <property type="match status" value="1"/>
</dbReference>
<dbReference type="SUPFAM" id="SSF47973">
    <property type="entry name" value="Ribosomal protein S7"/>
    <property type="match status" value="1"/>
</dbReference>
<dbReference type="PROSITE" id="PS00052">
    <property type="entry name" value="RIBOSOMAL_S7"/>
    <property type="match status" value="1"/>
</dbReference>
<gene>
    <name evidence="1" type="primary">rpsG</name>
    <name evidence="1" type="synonym">rps7</name>
    <name type="ordered locus">P9215_17781</name>
</gene>
<keyword id="KW-0687">Ribonucleoprotein</keyword>
<keyword id="KW-0689">Ribosomal protein</keyword>
<keyword id="KW-0694">RNA-binding</keyword>
<keyword id="KW-0699">rRNA-binding</keyword>
<keyword id="KW-0820">tRNA-binding</keyword>
<feature type="chain" id="PRO_1000060420" description="Small ribosomal subunit protein uS7">
    <location>
        <begin position="1"/>
        <end position="156"/>
    </location>
</feature>
<comment type="function">
    <text evidence="1">One of the primary rRNA binding proteins, it binds directly to 16S rRNA where it nucleates assembly of the head domain of the 30S subunit. Is located at the subunit interface close to the decoding center, probably blocks exit of the E-site tRNA.</text>
</comment>
<comment type="subunit">
    <text evidence="1">Part of the 30S ribosomal subunit. Contacts proteins S9 and S11.</text>
</comment>
<comment type="similarity">
    <text evidence="1">Belongs to the universal ribosomal protein uS7 family.</text>
</comment>
<reference key="1">
    <citation type="journal article" date="2007" name="PLoS Genet.">
        <title>Patterns and implications of gene gain and loss in the evolution of Prochlorococcus.</title>
        <authorList>
            <person name="Kettler G.C."/>
            <person name="Martiny A.C."/>
            <person name="Huang K."/>
            <person name="Zucker J."/>
            <person name="Coleman M.L."/>
            <person name="Rodrigue S."/>
            <person name="Chen F."/>
            <person name="Lapidus A."/>
            <person name="Ferriera S."/>
            <person name="Johnson J."/>
            <person name="Steglich C."/>
            <person name="Church G.M."/>
            <person name="Richardson P."/>
            <person name="Chisholm S.W."/>
        </authorList>
    </citation>
    <scope>NUCLEOTIDE SEQUENCE [LARGE SCALE GENOMIC DNA]</scope>
    <source>
        <strain>MIT 9215</strain>
    </source>
</reference>
<name>RS7_PROM2</name>
<organism>
    <name type="scientific">Prochlorococcus marinus (strain MIT 9215)</name>
    <dbReference type="NCBI Taxonomy" id="93060"/>
    <lineage>
        <taxon>Bacteria</taxon>
        <taxon>Bacillati</taxon>
        <taxon>Cyanobacteriota</taxon>
        <taxon>Cyanophyceae</taxon>
        <taxon>Synechococcales</taxon>
        <taxon>Prochlorococcaceae</taxon>
        <taxon>Prochlorococcus</taxon>
    </lineage>
</organism>
<sequence>MSRRNAAVKRPVLPDPQFNSRLASMMISRLMKHGKKSTAQRILSDAFSLISERTGGNAVELFETAVKNATPLVEVRARRVGGATYQVPMEVRQERGTAMALRWLVTFSRARNGKSMSQKLAGELMDAANETGSAVKKREDTHKMAEANKAFAHYRY</sequence>
<accession>A8G710</accession>
<proteinExistence type="inferred from homology"/>
<evidence type="ECO:0000255" key="1">
    <source>
        <dbReference type="HAMAP-Rule" id="MF_00480"/>
    </source>
</evidence>
<evidence type="ECO:0000305" key="2"/>
<protein>
    <recommendedName>
        <fullName evidence="1">Small ribosomal subunit protein uS7</fullName>
    </recommendedName>
    <alternativeName>
        <fullName evidence="2">30S ribosomal protein S7</fullName>
    </alternativeName>
</protein>